<evidence type="ECO:0000269" key="1">
    <source>
    </source>
</evidence>
<evidence type="ECO:0000305" key="2"/>
<comment type="function">
    <text>Contracts smooth muscle of the gastrointestinal and genitourinary tract, regulates growth hormone release, modulates insulin release, and may be involved in the control of adrenal secretion.</text>
</comment>
<comment type="subcellular location">
    <subcellularLocation>
        <location>Secreted</location>
    </subcellularLocation>
</comment>
<comment type="similarity">
    <text evidence="2">Belongs to the galanin family.</text>
</comment>
<reference key="1">
    <citation type="journal article" date="1995" name="Endocrinology">
        <title>Frog vasoactive intestinal polypeptide and galanin: primary structures and effects on pituitary adenylate cyclase.</title>
        <authorList>
            <person name="Chartrel N."/>
            <person name="Wang Y."/>
            <person name="Fournier A."/>
            <person name="Vaudry H."/>
            <person name="Conlon J.M."/>
        </authorList>
    </citation>
    <scope>PROTEIN SEQUENCE</scope>
    <scope>AMIDATION AT ALA-29</scope>
</reference>
<dbReference type="GO" id="GO:0005615">
    <property type="term" value="C:extracellular space"/>
    <property type="evidence" value="ECO:0007669"/>
    <property type="project" value="TreeGrafter"/>
</dbReference>
<dbReference type="GO" id="GO:0030141">
    <property type="term" value="C:secretory granule"/>
    <property type="evidence" value="ECO:0007669"/>
    <property type="project" value="TreeGrafter"/>
</dbReference>
<dbReference type="GO" id="GO:0031763">
    <property type="term" value="F:galanin receptor binding"/>
    <property type="evidence" value="ECO:0007669"/>
    <property type="project" value="TreeGrafter"/>
</dbReference>
<dbReference type="GO" id="GO:0005184">
    <property type="term" value="F:neuropeptide hormone activity"/>
    <property type="evidence" value="ECO:0007669"/>
    <property type="project" value="TreeGrafter"/>
</dbReference>
<dbReference type="GO" id="GO:0007218">
    <property type="term" value="P:neuropeptide signaling pathway"/>
    <property type="evidence" value="ECO:0007669"/>
    <property type="project" value="UniProtKB-KW"/>
</dbReference>
<dbReference type="InterPro" id="IPR008174">
    <property type="entry name" value="Galanin"/>
</dbReference>
<dbReference type="InterPro" id="IPR008175">
    <property type="entry name" value="Galanin_pre"/>
</dbReference>
<dbReference type="PANTHER" id="PTHR16839">
    <property type="entry name" value="GALANIN"/>
    <property type="match status" value="1"/>
</dbReference>
<dbReference type="PANTHER" id="PTHR16839:SF1">
    <property type="entry name" value="GALANIN PEPTIDES"/>
    <property type="match status" value="1"/>
</dbReference>
<dbReference type="Pfam" id="PF01296">
    <property type="entry name" value="Galanin"/>
    <property type="match status" value="1"/>
</dbReference>
<dbReference type="PRINTS" id="PR00273">
    <property type="entry name" value="GALANIN"/>
</dbReference>
<dbReference type="PROSITE" id="PS00861">
    <property type="entry name" value="GALANIN"/>
    <property type="match status" value="1"/>
</dbReference>
<gene>
    <name type="primary">gal</name>
</gene>
<feature type="peptide" id="PRO_0000043877" description="Galanin">
    <location>
        <begin position="1"/>
        <end position="29"/>
    </location>
</feature>
<feature type="modified residue" description="Alanine amide" evidence="1">
    <location>
        <position position="29"/>
    </location>
</feature>
<proteinExistence type="evidence at protein level"/>
<organism>
    <name type="scientific">Pelophylax ridibundus</name>
    <name type="common">Marsh frog</name>
    <name type="synonym">Rana ridibunda</name>
    <dbReference type="NCBI Taxonomy" id="8406"/>
    <lineage>
        <taxon>Eukaryota</taxon>
        <taxon>Metazoa</taxon>
        <taxon>Chordata</taxon>
        <taxon>Craniata</taxon>
        <taxon>Vertebrata</taxon>
        <taxon>Euteleostomi</taxon>
        <taxon>Amphibia</taxon>
        <taxon>Batrachia</taxon>
        <taxon>Anura</taxon>
        <taxon>Neobatrachia</taxon>
        <taxon>Ranoidea</taxon>
        <taxon>Ranidae</taxon>
        <taxon>Pelophylax</taxon>
    </lineage>
</organism>
<accession>P47216</accession>
<keyword id="KW-0027">Amidation</keyword>
<keyword id="KW-0903">Direct protein sequencing</keyword>
<keyword id="KW-0372">Hormone</keyword>
<keyword id="KW-0527">Neuropeptide</keyword>
<keyword id="KW-0964">Secreted</keyword>
<name>GALA_PELRI</name>
<sequence length="29" mass="3162">GWTLNSAGYLLGPHAIDNHRSFNDKHGLA</sequence>
<protein>
    <recommendedName>
        <fullName>Galanin</fullName>
    </recommendedName>
</protein>